<gene>
    <name type="primary">wdr70</name>
</gene>
<dbReference type="EMBL" id="BC121303">
    <property type="protein sequence ID" value="AAI21304.1"/>
    <property type="molecule type" value="mRNA"/>
</dbReference>
<dbReference type="RefSeq" id="NP_001072792.1">
    <property type="nucleotide sequence ID" value="NM_001079324.2"/>
</dbReference>
<dbReference type="RefSeq" id="XP_012821388.1">
    <property type="nucleotide sequence ID" value="XM_012965934.3"/>
</dbReference>
<dbReference type="RefSeq" id="XP_012821394.1">
    <property type="nucleotide sequence ID" value="XM_012965940.3"/>
</dbReference>
<dbReference type="SMR" id="Q0VA16"/>
<dbReference type="FunCoup" id="Q0VA16">
    <property type="interactions" value="3900"/>
</dbReference>
<dbReference type="STRING" id="8364.ENSXETP00000035549"/>
<dbReference type="PaxDb" id="8364-ENSXETP00000023221"/>
<dbReference type="DNASU" id="780253"/>
<dbReference type="GeneID" id="780253"/>
<dbReference type="KEGG" id="xtr:780253"/>
<dbReference type="AGR" id="Xenbase:XB-GENE-956087"/>
<dbReference type="CTD" id="55100"/>
<dbReference type="Xenbase" id="XB-GENE-956087">
    <property type="gene designation" value="wdr70"/>
</dbReference>
<dbReference type="eggNOG" id="KOG0772">
    <property type="taxonomic scope" value="Eukaryota"/>
</dbReference>
<dbReference type="InParanoid" id="Q0VA16"/>
<dbReference type="OMA" id="KGDQYIT"/>
<dbReference type="OrthoDB" id="10264376at2759"/>
<dbReference type="Reactome" id="R-XTR-72163">
    <property type="pathway name" value="mRNA Splicing - Major Pathway"/>
</dbReference>
<dbReference type="Proteomes" id="UP000008143">
    <property type="component" value="Chromosome 1"/>
</dbReference>
<dbReference type="Bgee" id="ENSXETG00000004784">
    <property type="expression patterns" value="Expressed in gastrula and 13 other cell types or tissues"/>
</dbReference>
<dbReference type="FunFam" id="2.130.10.10:FF:002005">
    <property type="entry name" value="WD repeat domain 70"/>
    <property type="match status" value="1"/>
</dbReference>
<dbReference type="FunFam" id="2.130.10.10:FF:000294">
    <property type="entry name" value="WD repeat-containing protein 70"/>
    <property type="match status" value="1"/>
</dbReference>
<dbReference type="Gene3D" id="2.130.10.10">
    <property type="entry name" value="YVTN repeat-like/Quinoprotein amine dehydrogenase"/>
    <property type="match status" value="2"/>
</dbReference>
<dbReference type="InterPro" id="IPR020472">
    <property type="entry name" value="G-protein_beta_WD-40_rep"/>
</dbReference>
<dbReference type="InterPro" id="IPR015943">
    <property type="entry name" value="WD40/YVTN_repeat-like_dom_sf"/>
</dbReference>
<dbReference type="InterPro" id="IPR036322">
    <property type="entry name" value="WD40_repeat_dom_sf"/>
</dbReference>
<dbReference type="InterPro" id="IPR001680">
    <property type="entry name" value="WD40_rpt"/>
</dbReference>
<dbReference type="InterPro" id="IPR051858">
    <property type="entry name" value="WD_repeat_GAD-1"/>
</dbReference>
<dbReference type="PANTHER" id="PTHR16017">
    <property type="entry name" value="GASTRULATION DEFECTIVE PROTEIN 1-RELATED"/>
    <property type="match status" value="1"/>
</dbReference>
<dbReference type="PANTHER" id="PTHR16017:SF0">
    <property type="entry name" value="WD REPEAT-CONTAINING PROTEIN 70"/>
    <property type="match status" value="1"/>
</dbReference>
<dbReference type="Pfam" id="PF00400">
    <property type="entry name" value="WD40"/>
    <property type="match status" value="4"/>
</dbReference>
<dbReference type="PRINTS" id="PR00320">
    <property type="entry name" value="GPROTEINBRPT"/>
</dbReference>
<dbReference type="SMART" id="SM00320">
    <property type="entry name" value="WD40"/>
    <property type="match status" value="7"/>
</dbReference>
<dbReference type="SUPFAM" id="SSF50978">
    <property type="entry name" value="WD40 repeat-like"/>
    <property type="match status" value="1"/>
</dbReference>
<dbReference type="PROSITE" id="PS00678">
    <property type="entry name" value="WD_REPEATS_1"/>
    <property type="match status" value="1"/>
</dbReference>
<dbReference type="PROSITE" id="PS50082">
    <property type="entry name" value="WD_REPEATS_2"/>
    <property type="match status" value="3"/>
</dbReference>
<dbReference type="PROSITE" id="PS50294">
    <property type="entry name" value="WD_REPEATS_REGION"/>
    <property type="match status" value="1"/>
</dbReference>
<name>WDR70_XENTR</name>
<organism>
    <name type="scientific">Xenopus tropicalis</name>
    <name type="common">Western clawed frog</name>
    <name type="synonym">Silurana tropicalis</name>
    <dbReference type="NCBI Taxonomy" id="8364"/>
    <lineage>
        <taxon>Eukaryota</taxon>
        <taxon>Metazoa</taxon>
        <taxon>Chordata</taxon>
        <taxon>Craniata</taxon>
        <taxon>Vertebrata</taxon>
        <taxon>Euteleostomi</taxon>
        <taxon>Amphibia</taxon>
        <taxon>Batrachia</taxon>
        <taxon>Anura</taxon>
        <taxon>Pipoidea</taxon>
        <taxon>Pipidae</taxon>
        <taxon>Xenopodinae</taxon>
        <taxon>Xenopus</taxon>
        <taxon>Silurana</taxon>
    </lineage>
</organism>
<sequence length="622" mass="68926">MDENEDSSIAATMGFSGFGKKARTFDLEAMFEQTRRTAVERSKKTLEAREKEEQISNKSPVMKDVPSSSRQKNTDTSSSSSGSEDSSDDELIGPPVPSNLTGDHGDELIGPPLPSGYKDSDDEDEEQHEDDDNPVKGIPDSHEITLQHGTKTVSALGLDPSGARLVTGGFDYDVRFWDFAGMDASLQAFRSLQPCECHQIKSLQYSNTGDVILVVAGNSQAKVLDRDGFPVMECVKGDQYIVDMANTKGHTAMLNGGCWHPKIKEEFMTCSNDGTVRTWDVSNEKKHKGVFKPRSMQGKRVIPTCCTYSRDGKFIAAGCQDGSIQIWDRNMSVHTKFHCRQAHTPGTDTSCVTFSYAGNILATRGGDDTLKTWDIRKFKNPLNVASGLANYFPMTDCCFSPDDKLLITGTSVKRGGGDGKLMFFDVGTFQKVYEIQVTEASVVRCLWHPKLNQIMVGTGNGLAKVYYDPNRSQRGAKLCVVKTQRKARQAETLTQDYIITPHALPMFREPRQRSTRKQLEKDRLDPVKSHKPEPPVAGPGRGGRVGTHGGTLSSFIVKNIALDKTDDSNPREAILRHAKDAEKNPYWVAPAYSKTQPNTVFAEVESDEEETDNEPEWKKRKI</sequence>
<feature type="chain" id="PRO_0000305148" description="WD repeat-containing protein 70">
    <location>
        <begin position="1"/>
        <end position="622"/>
    </location>
</feature>
<feature type="repeat" description="WD 1">
    <location>
        <begin position="148"/>
        <end position="187"/>
    </location>
</feature>
<feature type="repeat" description="WD 2">
    <location>
        <begin position="195"/>
        <end position="236"/>
    </location>
</feature>
<feature type="repeat" description="WD 3">
    <location>
        <begin position="249"/>
        <end position="289"/>
    </location>
</feature>
<feature type="repeat" description="WD 4">
    <location>
        <begin position="298"/>
        <end position="337"/>
    </location>
</feature>
<feature type="repeat" description="WD 5">
    <location>
        <begin position="344"/>
        <end position="383"/>
    </location>
</feature>
<feature type="repeat" description="WD 6">
    <location>
        <begin position="389"/>
        <end position="434"/>
    </location>
</feature>
<feature type="repeat" description="WD 7">
    <location>
        <begin position="437"/>
        <end position="476"/>
    </location>
</feature>
<feature type="region of interest" description="Disordered" evidence="1">
    <location>
        <begin position="37"/>
        <end position="141"/>
    </location>
</feature>
<feature type="region of interest" description="Disordered" evidence="1">
    <location>
        <begin position="508"/>
        <end position="549"/>
    </location>
</feature>
<feature type="region of interest" description="Disordered" evidence="1">
    <location>
        <begin position="602"/>
        <end position="622"/>
    </location>
</feature>
<feature type="compositionally biased region" description="Basic and acidic residues" evidence="1">
    <location>
        <begin position="37"/>
        <end position="55"/>
    </location>
</feature>
<feature type="compositionally biased region" description="Low complexity" evidence="1">
    <location>
        <begin position="67"/>
        <end position="84"/>
    </location>
</feature>
<feature type="compositionally biased region" description="Acidic residues" evidence="1">
    <location>
        <begin position="120"/>
        <end position="132"/>
    </location>
</feature>
<feature type="compositionally biased region" description="Basic and acidic residues" evidence="1">
    <location>
        <begin position="508"/>
        <end position="533"/>
    </location>
</feature>
<feature type="compositionally biased region" description="Gly residues" evidence="1">
    <location>
        <begin position="539"/>
        <end position="549"/>
    </location>
</feature>
<feature type="compositionally biased region" description="Acidic residues" evidence="1">
    <location>
        <begin position="604"/>
        <end position="614"/>
    </location>
</feature>
<reference key="1">
    <citation type="submission" date="2006-08" db="EMBL/GenBank/DDBJ databases">
        <authorList>
            <consortium name="NIH - Xenopus Gene Collection (XGC) project"/>
        </authorList>
    </citation>
    <scope>NUCLEOTIDE SEQUENCE [LARGE SCALE MRNA]</scope>
    <source>
        <tissue>Testis</tissue>
    </source>
</reference>
<comment type="similarity">
    <text evidence="2">Belongs to the WD repeat GAD-1 family.</text>
</comment>
<evidence type="ECO:0000256" key="1">
    <source>
        <dbReference type="SAM" id="MobiDB-lite"/>
    </source>
</evidence>
<evidence type="ECO:0000305" key="2"/>
<accession>Q0VA16</accession>
<protein>
    <recommendedName>
        <fullName>WD repeat-containing protein 70</fullName>
    </recommendedName>
</protein>
<proteinExistence type="evidence at transcript level"/>
<keyword id="KW-1185">Reference proteome</keyword>
<keyword id="KW-0677">Repeat</keyword>
<keyword id="KW-0853">WD repeat</keyword>